<name>DHSD_RAT</name>
<protein>
    <recommendedName>
        <fullName>Succinate dehydrogenase [ubiquinone] cytochrome b small subunit, mitochondrial</fullName>
        <shortName>CybS</shortName>
    </recommendedName>
    <alternativeName>
        <fullName>CII-4</fullName>
    </alternativeName>
    <alternativeName>
        <fullName>Malate dehydrogenase [quinone] cytochrome b small subunit</fullName>
    </alternativeName>
    <alternativeName>
        <fullName>QPs3</fullName>
    </alternativeName>
    <alternativeName>
        <fullName>Succinate dehydrogenase complex subunit D</fullName>
    </alternativeName>
    <alternativeName>
        <fullName>Succinate-ubiquinone oxidoreductase cytochrome b small subunit</fullName>
    </alternativeName>
    <alternativeName>
        <fullName>Succinate-ubiquinone reductase membrane anchor subunit</fullName>
    </alternativeName>
</protein>
<proteinExistence type="evidence at transcript level"/>
<keyword id="KW-0249">Electron transport</keyword>
<keyword id="KW-0349">Heme</keyword>
<keyword id="KW-0408">Iron</keyword>
<keyword id="KW-0472">Membrane</keyword>
<keyword id="KW-0479">Metal-binding</keyword>
<keyword id="KW-0496">Mitochondrion</keyword>
<keyword id="KW-0999">Mitochondrion inner membrane</keyword>
<keyword id="KW-1185">Reference proteome</keyword>
<keyword id="KW-0809">Transit peptide</keyword>
<keyword id="KW-0812">Transmembrane</keyword>
<keyword id="KW-1133">Transmembrane helix</keyword>
<keyword id="KW-0813">Transport</keyword>
<keyword id="KW-0816">Tricarboxylic acid cycle</keyword>
<comment type="function">
    <text evidence="1 2">Membrane-anchoring subunit of succinate dehydrogenase (SDH) that is involved in complex II of the mitochondrial electron transport chain and is responsible for transferring electrons from succinate to ubiquinone (coenzyme Q) (By similarity). SDH also oxidizes malate to the non-canonical enol form of oxaloacetate, enol-oxaloacetate. Enol-oxaloacetate, which is a potent inhibitor of the succinate dehydrogenase activity, is further isomerized into keto-oxaloacetate (By similarity).</text>
</comment>
<comment type="pathway">
    <text evidence="1">Carbohydrate metabolism; tricarboxylic acid cycle.</text>
</comment>
<comment type="subunit">
    <text evidence="1">Component of complex II composed of four subunits: the flavoprotein (FP) SDHA, iron-sulfur protein (IP) SDHB, and a cytochrome b560 composed of SDHC and SDHD.</text>
</comment>
<comment type="subcellular location">
    <subcellularLocation>
        <location evidence="1">Mitochondrion inner membrane</location>
        <topology evidence="3">Multi-pass membrane protein</topology>
    </subcellularLocation>
</comment>
<comment type="similarity">
    <text evidence="4">Belongs to the CybS family.</text>
</comment>
<organism>
    <name type="scientific">Rattus norvegicus</name>
    <name type="common">Rat</name>
    <dbReference type="NCBI Taxonomy" id="10116"/>
    <lineage>
        <taxon>Eukaryota</taxon>
        <taxon>Metazoa</taxon>
        <taxon>Chordata</taxon>
        <taxon>Craniata</taxon>
        <taxon>Vertebrata</taxon>
        <taxon>Euteleostomi</taxon>
        <taxon>Mammalia</taxon>
        <taxon>Eutheria</taxon>
        <taxon>Euarchontoglires</taxon>
        <taxon>Glires</taxon>
        <taxon>Rodentia</taxon>
        <taxon>Myomorpha</taxon>
        <taxon>Muroidea</taxon>
        <taxon>Muridae</taxon>
        <taxon>Murinae</taxon>
        <taxon>Rattus</taxon>
    </lineage>
</organism>
<accession>Q6PCT8</accession>
<feature type="transit peptide" description="Mitochondrion" evidence="3">
    <location>
        <begin position="1"/>
        <end position="56"/>
    </location>
</feature>
<feature type="chain" id="PRO_0000006489" description="Succinate dehydrogenase [ubiquinone] cytochrome b small subunit, mitochondrial">
    <location>
        <begin position="57"/>
        <end position="159"/>
    </location>
</feature>
<feature type="topological domain" description="Mitochondrial matrix" evidence="1">
    <location>
        <begin position="57"/>
        <end position="63"/>
    </location>
</feature>
<feature type="transmembrane region" description="Helical" evidence="1">
    <location>
        <begin position="64"/>
        <end position="85"/>
    </location>
</feature>
<feature type="topological domain" description="Mitochondrial intermembrane" evidence="1">
    <location>
        <begin position="86"/>
        <end position="90"/>
    </location>
</feature>
<feature type="transmembrane region" description="Helical" evidence="1">
    <location>
        <begin position="91"/>
        <end position="111"/>
    </location>
</feature>
<feature type="topological domain" description="Mitochondrial matrix" evidence="1">
    <location>
        <begin position="112"/>
        <end position="120"/>
    </location>
</feature>
<feature type="transmembrane region" description="Helical" evidence="1">
    <location>
        <begin position="121"/>
        <end position="142"/>
    </location>
</feature>
<feature type="topological domain" description="Mitochondrial intermembrane" evidence="1">
    <location>
        <begin position="143"/>
        <end position="159"/>
    </location>
</feature>
<feature type="binding site" description="axial binding residue" evidence="1">
    <location>
        <position position="102"/>
    </location>
    <ligand>
        <name>heme b</name>
        <dbReference type="ChEBI" id="CHEBI:60344"/>
        <note>ligand shared with SDHC</note>
    </ligand>
    <ligandPart>
        <name>Fe</name>
        <dbReference type="ChEBI" id="CHEBI:18248"/>
    </ligandPart>
</feature>
<feature type="binding site" evidence="1">
    <location>
        <position position="114"/>
    </location>
    <ligand>
        <name>a ubiquinone</name>
        <dbReference type="ChEBI" id="CHEBI:16389"/>
        <note>ligand shared with IP/SDHB</note>
    </ligand>
</feature>
<gene>
    <name type="primary">Sdhd</name>
</gene>
<evidence type="ECO:0000250" key="1">
    <source>
        <dbReference type="UniProtKB" id="O14521"/>
    </source>
</evidence>
<evidence type="ECO:0000250" key="2">
    <source>
        <dbReference type="UniProtKB" id="Q95123"/>
    </source>
</evidence>
<evidence type="ECO:0000255" key="3"/>
<evidence type="ECO:0000305" key="4"/>
<reference key="1">
    <citation type="journal article" date="2004" name="Genome Res.">
        <title>The status, quality, and expansion of the NIH full-length cDNA project: the Mammalian Gene Collection (MGC).</title>
        <authorList>
            <consortium name="The MGC Project Team"/>
        </authorList>
    </citation>
    <scope>NUCLEOTIDE SEQUENCE [LARGE SCALE MRNA]</scope>
    <source>
        <tissue>Pituitary</tissue>
    </source>
</reference>
<sequence length="159" mass="16976">MAVLLKLGVLCSGQGARALSLRSRAVRPAFVSAFLQDQPTPGWRGTQHIHLSPSHQSGSKAASLHWTSERVVSVLLLGLIPAGYLNPCSVVDYSLAAALTLHSHWGIGQVVTDYVHGDALQKATKAGLLAVSALTFAGLCYFNYHDVGICRAVAMLWKL</sequence>
<dbReference type="EMBL" id="BC059160">
    <property type="protein sequence ID" value="AAH59160.1"/>
    <property type="molecule type" value="mRNA"/>
</dbReference>
<dbReference type="RefSeq" id="NP_942083.1">
    <property type="nucleotide sequence ID" value="NM_198788.3"/>
</dbReference>
<dbReference type="SMR" id="Q6PCT8"/>
<dbReference type="ComplexPortal" id="CPX-564">
    <property type="entry name" value="Mitochondrial respiratory chain complex II"/>
</dbReference>
<dbReference type="FunCoup" id="Q6PCT8">
    <property type="interactions" value="2338"/>
</dbReference>
<dbReference type="STRING" id="10116.ENSRNOP00000055942"/>
<dbReference type="GlyGen" id="Q6PCT8">
    <property type="glycosylation" value="1 site"/>
</dbReference>
<dbReference type="PaxDb" id="10116-ENSRNOP00000055942"/>
<dbReference type="Ensembl" id="ENSRNOT00000059169.3">
    <property type="protein sequence ID" value="ENSRNOP00000055942.2"/>
    <property type="gene ID" value="ENSRNOG00000022980.6"/>
</dbReference>
<dbReference type="GeneID" id="363061"/>
<dbReference type="KEGG" id="rno:363061"/>
<dbReference type="UCSC" id="RGD:735231">
    <property type="organism name" value="rat"/>
</dbReference>
<dbReference type="AGR" id="RGD:735231"/>
<dbReference type="CTD" id="6392"/>
<dbReference type="RGD" id="735231">
    <property type="gene designation" value="Sdhd"/>
</dbReference>
<dbReference type="eggNOG" id="KOG4097">
    <property type="taxonomic scope" value="Eukaryota"/>
</dbReference>
<dbReference type="GeneTree" id="ENSGT00390000010003"/>
<dbReference type="HOGENOM" id="CLU_096618_1_1_1"/>
<dbReference type="InParanoid" id="Q6PCT8"/>
<dbReference type="OMA" id="VMHQHWG"/>
<dbReference type="OrthoDB" id="18577at2759"/>
<dbReference type="Reactome" id="R-RNO-71403">
    <property type="pathway name" value="Citric acid cycle (TCA cycle)"/>
</dbReference>
<dbReference type="SABIO-RK" id="Q6PCT8"/>
<dbReference type="UniPathway" id="UPA00223"/>
<dbReference type="PRO" id="PR:Q6PCT8"/>
<dbReference type="Proteomes" id="UP000002494">
    <property type="component" value="Chromosome 8"/>
</dbReference>
<dbReference type="Bgee" id="ENSRNOG00000022980">
    <property type="expression patterns" value="Expressed in heart and 20 other cell types or tissues"/>
</dbReference>
<dbReference type="GO" id="GO:0005743">
    <property type="term" value="C:mitochondrial inner membrane"/>
    <property type="evidence" value="ECO:0000250"/>
    <property type="project" value="UniProtKB"/>
</dbReference>
<dbReference type="GO" id="GO:0005739">
    <property type="term" value="C:mitochondrion"/>
    <property type="evidence" value="ECO:0000266"/>
    <property type="project" value="RGD"/>
</dbReference>
<dbReference type="GO" id="GO:0045273">
    <property type="term" value="C:respiratory chain complex II (succinate dehydrogenase)"/>
    <property type="evidence" value="ECO:0000250"/>
    <property type="project" value="UniProtKB"/>
</dbReference>
<dbReference type="GO" id="GO:0020037">
    <property type="term" value="F:heme binding"/>
    <property type="evidence" value="ECO:0000250"/>
    <property type="project" value="UniProtKB"/>
</dbReference>
<dbReference type="GO" id="GO:0046872">
    <property type="term" value="F:metal ion binding"/>
    <property type="evidence" value="ECO:0007669"/>
    <property type="project" value="UniProtKB-KW"/>
</dbReference>
<dbReference type="GO" id="GO:0043495">
    <property type="term" value="F:protein-membrane adaptor activity"/>
    <property type="evidence" value="ECO:0000266"/>
    <property type="project" value="RGD"/>
</dbReference>
<dbReference type="GO" id="GO:0008177">
    <property type="term" value="F:succinate dehydrogenase (quinone) activity"/>
    <property type="evidence" value="ECO:0000266"/>
    <property type="project" value="RGD"/>
</dbReference>
<dbReference type="GO" id="GO:0048039">
    <property type="term" value="F:ubiquinone binding"/>
    <property type="evidence" value="ECO:0000250"/>
    <property type="project" value="UniProtKB"/>
</dbReference>
<dbReference type="GO" id="GO:0071456">
    <property type="term" value="P:cellular response to hypoxia"/>
    <property type="evidence" value="ECO:0000266"/>
    <property type="project" value="RGD"/>
</dbReference>
<dbReference type="GO" id="GO:0006121">
    <property type="term" value="P:mitochondrial electron transport, succinate to ubiquinone"/>
    <property type="evidence" value="ECO:0000318"/>
    <property type="project" value="GO_Central"/>
</dbReference>
<dbReference type="GO" id="GO:0042776">
    <property type="term" value="P:proton motive force-driven mitochondrial ATP synthesis"/>
    <property type="evidence" value="ECO:0000303"/>
    <property type="project" value="ComplexPortal"/>
</dbReference>
<dbReference type="GO" id="GO:0050433">
    <property type="term" value="P:regulation of catecholamine secretion"/>
    <property type="evidence" value="ECO:0000266"/>
    <property type="project" value="RGD"/>
</dbReference>
<dbReference type="GO" id="GO:0006099">
    <property type="term" value="P:tricarboxylic acid cycle"/>
    <property type="evidence" value="ECO:0000266"/>
    <property type="project" value="RGD"/>
</dbReference>
<dbReference type="CDD" id="cd03496">
    <property type="entry name" value="SQR_TypeC_CybS"/>
    <property type="match status" value="1"/>
</dbReference>
<dbReference type="FunFam" id="1.20.1300.10:FF:000009">
    <property type="entry name" value="Succinate dehydrogenase [ubiquinone] cytochrome b small subunit, mitochondrial"/>
    <property type="match status" value="1"/>
</dbReference>
<dbReference type="Gene3D" id="1.20.1300.10">
    <property type="entry name" value="Fumarate reductase/succinate dehydrogenase, transmembrane subunit"/>
    <property type="match status" value="1"/>
</dbReference>
<dbReference type="InterPro" id="IPR007992">
    <property type="entry name" value="CybS"/>
</dbReference>
<dbReference type="InterPro" id="IPR034804">
    <property type="entry name" value="SQR/QFR_C/D"/>
</dbReference>
<dbReference type="PANTHER" id="PTHR13337">
    <property type="entry name" value="SUCCINATE DEHYDROGENASE"/>
    <property type="match status" value="1"/>
</dbReference>
<dbReference type="PANTHER" id="PTHR13337:SF2">
    <property type="entry name" value="SUCCINATE DEHYDROGENASE [UBIQUINONE] CYTOCHROME B SMALL SUBUNIT, MITOCHONDRIAL"/>
    <property type="match status" value="1"/>
</dbReference>
<dbReference type="Pfam" id="PF05328">
    <property type="entry name" value="CybS"/>
    <property type="match status" value="1"/>
</dbReference>
<dbReference type="SUPFAM" id="SSF81343">
    <property type="entry name" value="Fumarate reductase respiratory complex transmembrane subunits"/>
    <property type="match status" value="1"/>
</dbReference>